<feature type="chain" id="PRO_1000118244" description="ATP phosphoribosyltransferase">
    <location>
        <begin position="1"/>
        <end position="283"/>
    </location>
</feature>
<keyword id="KW-0028">Amino-acid biosynthesis</keyword>
<keyword id="KW-0067">ATP-binding</keyword>
<keyword id="KW-0963">Cytoplasm</keyword>
<keyword id="KW-0328">Glycosyltransferase</keyword>
<keyword id="KW-0368">Histidine biosynthesis</keyword>
<keyword id="KW-0460">Magnesium</keyword>
<keyword id="KW-0479">Metal-binding</keyword>
<keyword id="KW-0547">Nucleotide-binding</keyword>
<keyword id="KW-0808">Transferase</keyword>
<organism>
    <name type="scientific">Bifidobacterium longum subsp. infantis (strain ATCC 15697 / DSM 20088 / JCM 1222 / NCTC 11817 / S12)</name>
    <dbReference type="NCBI Taxonomy" id="391904"/>
    <lineage>
        <taxon>Bacteria</taxon>
        <taxon>Bacillati</taxon>
        <taxon>Actinomycetota</taxon>
        <taxon>Actinomycetes</taxon>
        <taxon>Bifidobacteriales</taxon>
        <taxon>Bifidobacteriaceae</taxon>
        <taxon>Bifidobacterium</taxon>
    </lineage>
</organism>
<name>HIS1_BIFLS</name>
<accession>B7GRM4</accession>
<accession>E8MKB6</accession>
<reference key="1">
    <citation type="journal article" date="2008" name="Proc. Natl. Acad. Sci. U.S.A.">
        <title>The genome sequence of Bifidobacterium longum subsp. infantis reveals adaptations for milk utilization within the infant microbiome.</title>
        <authorList>
            <person name="Sela D.A."/>
            <person name="Chapman J."/>
            <person name="Adeuya A."/>
            <person name="Kim J.H."/>
            <person name="Chen F."/>
            <person name="Whitehead T.R."/>
            <person name="Lapidus A."/>
            <person name="Rokhsar D.S."/>
            <person name="Lebrilla C.B."/>
            <person name="German J.B."/>
            <person name="Price N.P."/>
            <person name="Richardson P.M."/>
            <person name="Mills D.A."/>
        </authorList>
    </citation>
    <scope>NUCLEOTIDE SEQUENCE [LARGE SCALE GENOMIC DNA]</scope>
    <source>
        <strain>ATCC 15697 / DSM 20088 / JCM 1222 / NCTC 11817 / S12</strain>
    </source>
</reference>
<reference key="2">
    <citation type="journal article" date="2011" name="Nature">
        <title>Bifidobacteria can protect from enteropathogenic infection through production of acetate.</title>
        <authorList>
            <person name="Fukuda S."/>
            <person name="Toh H."/>
            <person name="Hase K."/>
            <person name="Oshima K."/>
            <person name="Nakanishi Y."/>
            <person name="Yoshimura K."/>
            <person name="Tobe T."/>
            <person name="Clarke J.M."/>
            <person name="Topping D.L."/>
            <person name="Suzuki T."/>
            <person name="Taylor T.D."/>
            <person name="Itoh K."/>
            <person name="Kikuchi J."/>
            <person name="Morita H."/>
            <person name="Hattori M."/>
            <person name="Ohno H."/>
        </authorList>
    </citation>
    <scope>NUCLEOTIDE SEQUENCE [LARGE SCALE GENOMIC DNA]</scope>
    <source>
        <strain>ATCC 15697 / DSM 20088 / JCM 1222 / NCTC 11817 / S12</strain>
    </source>
</reference>
<evidence type="ECO:0000255" key="1">
    <source>
        <dbReference type="HAMAP-Rule" id="MF_00079"/>
    </source>
</evidence>
<proteinExistence type="inferred from homology"/>
<comment type="function">
    <text evidence="1">Catalyzes the condensation of ATP and 5-phosphoribose 1-diphosphate to form N'-(5'-phosphoribosyl)-ATP (PR-ATP). Has a crucial role in the pathway because the rate of histidine biosynthesis seems to be controlled primarily by regulation of HisG enzymatic activity.</text>
</comment>
<comment type="catalytic activity">
    <reaction evidence="1">
        <text>1-(5-phospho-beta-D-ribosyl)-ATP + diphosphate = 5-phospho-alpha-D-ribose 1-diphosphate + ATP</text>
        <dbReference type="Rhea" id="RHEA:18473"/>
        <dbReference type="ChEBI" id="CHEBI:30616"/>
        <dbReference type="ChEBI" id="CHEBI:33019"/>
        <dbReference type="ChEBI" id="CHEBI:58017"/>
        <dbReference type="ChEBI" id="CHEBI:73183"/>
        <dbReference type="EC" id="2.4.2.17"/>
    </reaction>
</comment>
<comment type="cofactor">
    <cofactor evidence="1">
        <name>Mg(2+)</name>
        <dbReference type="ChEBI" id="CHEBI:18420"/>
    </cofactor>
</comment>
<comment type="activity regulation">
    <text evidence="1">Feedback inhibited by histidine.</text>
</comment>
<comment type="pathway">
    <text evidence="1">Amino-acid biosynthesis; L-histidine biosynthesis; L-histidine from 5-phospho-alpha-D-ribose 1-diphosphate: step 1/9.</text>
</comment>
<comment type="subcellular location">
    <subcellularLocation>
        <location evidence="1">Cytoplasm</location>
    </subcellularLocation>
</comment>
<comment type="similarity">
    <text evidence="1">Belongs to the ATP phosphoribosyltransferase family. Long subfamily.</text>
</comment>
<gene>
    <name evidence="1" type="primary">hisG</name>
    <name type="ordered locus">Blon_1366</name>
    <name type="ordered locus">BLIJ_1410</name>
</gene>
<dbReference type="EC" id="2.4.2.17" evidence="1"/>
<dbReference type="EMBL" id="CP001095">
    <property type="protein sequence ID" value="ACJ52454.1"/>
    <property type="molecule type" value="Genomic_DNA"/>
</dbReference>
<dbReference type="EMBL" id="AP010889">
    <property type="protein sequence ID" value="BAJ68993.1"/>
    <property type="molecule type" value="Genomic_DNA"/>
</dbReference>
<dbReference type="RefSeq" id="WP_012577706.1">
    <property type="nucleotide sequence ID" value="NZ_JDTT01000051.1"/>
</dbReference>
<dbReference type="SMR" id="B7GRM4"/>
<dbReference type="KEGG" id="bln:Blon_1366"/>
<dbReference type="KEGG" id="blon:BLIJ_1410"/>
<dbReference type="PATRIC" id="fig|391904.8.peg.1419"/>
<dbReference type="HOGENOM" id="CLU_038115_1_1_11"/>
<dbReference type="UniPathway" id="UPA00031">
    <property type="reaction ID" value="UER00006"/>
</dbReference>
<dbReference type="Proteomes" id="UP000001360">
    <property type="component" value="Chromosome"/>
</dbReference>
<dbReference type="GO" id="GO:0005737">
    <property type="term" value="C:cytoplasm"/>
    <property type="evidence" value="ECO:0007669"/>
    <property type="project" value="UniProtKB-SubCell"/>
</dbReference>
<dbReference type="GO" id="GO:0005524">
    <property type="term" value="F:ATP binding"/>
    <property type="evidence" value="ECO:0007669"/>
    <property type="project" value="UniProtKB-KW"/>
</dbReference>
<dbReference type="GO" id="GO:0003879">
    <property type="term" value="F:ATP phosphoribosyltransferase activity"/>
    <property type="evidence" value="ECO:0007669"/>
    <property type="project" value="UniProtKB-UniRule"/>
</dbReference>
<dbReference type="GO" id="GO:0000287">
    <property type="term" value="F:magnesium ion binding"/>
    <property type="evidence" value="ECO:0007669"/>
    <property type="project" value="UniProtKB-UniRule"/>
</dbReference>
<dbReference type="GO" id="GO:0000105">
    <property type="term" value="P:L-histidine biosynthetic process"/>
    <property type="evidence" value="ECO:0007669"/>
    <property type="project" value="UniProtKB-UniRule"/>
</dbReference>
<dbReference type="Gene3D" id="3.30.70.120">
    <property type="match status" value="1"/>
</dbReference>
<dbReference type="Gene3D" id="3.40.190.10">
    <property type="entry name" value="Periplasmic binding protein-like II"/>
    <property type="match status" value="2"/>
</dbReference>
<dbReference type="HAMAP" id="MF_00079">
    <property type="entry name" value="HisG_Long"/>
    <property type="match status" value="1"/>
</dbReference>
<dbReference type="InterPro" id="IPR020621">
    <property type="entry name" value="ATP-PRT_HisG_long"/>
</dbReference>
<dbReference type="InterPro" id="IPR013820">
    <property type="entry name" value="ATP_PRibTrfase_cat"/>
</dbReference>
<dbReference type="InterPro" id="IPR018198">
    <property type="entry name" value="ATP_PRibTrfase_CS"/>
</dbReference>
<dbReference type="InterPro" id="IPR001348">
    <property type="entry name" value="ATP_PRibTrfase_HisG"/>
</dbReference>
<dbReference type="InterPro" id="IPR013115">
    <property type="entry name" value="HisG_C"/>
</dbReference>
<dbReference type="InterPro" id="IPR011322">
    <property type="entry name" value="N-reg_PII-like_a/b"/>
</dbReference>
<dbReference type="InterPro" id="IPR015867">
    <property type="entry name" value="N-reg_PII/ATP_PRibTrfase_C"/>
</dbReference>
<dbReference type="NCBIfam" id="TIGR00070">
    <property type="entry name" value="hisG"/>
    <property type="match status" value="1"/>
</dbReference>
<dbReference type="NCBIfam" id="TIGR03455">
    <property type="entry name" value="HisG_C-term"/>
    <property type="match status" value="1"/>
</dbReference>
<dbReference type="PANTHER" id="PTHR21403:SF8">
    <property type="entry name" value="ATP PHOSPHORIBOSYLTRANSFERASE"/>
    <property type="match status" value="1"/>
</dbReference>
<dbReference type="PANTHER" id="PTHR21403">
    <property type="entry name" value="ATP PHOSPHORIBOSYLTRANSFERASE ATP-PRTASE"/>
    <property type="match status" value="1"/>
</dbReference>
<dbReference type="Pfam" id="PF01634">
    <property type="entry name" value="HisG"/>
    <property type="match status" value="1"/>
</dbReference>
<dbReference type="Pfam" id="PF08029">
    <property type="entry name" value="HisG_C"/>
    <property type="match status" value="1"/>
</dbReference>
<dbReference type="SUPFAM" id="SSF54913">
    <property type="entry name" value="GlnB-like"/>
    <property type="match status" value="1"/>
</dbReference>
<dbReference type="SUPFAM" id="SSF53850">
    <property type="entry name" value="Periplasmic binding protein-like II"/>
    <property type="match status" value="1"/>
</dbReference>
<dbReference type="PROSITE" id="PS01316">
    <property type="entry name" value="ATP_P_PHORIBOSYLTR"/>
    <property type="match status" value="1"/>
</dbReference>
<sequence>MLRIAVPNKGMLSEPAWNMLAEAGYRLRINPRQLVVQDPDNGIELFYLRPLDIAVYVGRGAIDVGITGQDLLKNSGTAALEHMPLGFGASTFRFAAPNESPITTLEDVQGKRVATTFDKLVHDYLVEHGIQAETIHLDGAVESSVQLGVADLIADVVSTGTTLRNAGLRVFAEPLMHSEACLIRSPRLNEQDPRLAVLTRRLQGVLTAHQYVLMDYDIPISKVAAAVAVTPGFESPTISPLHDKQWNAVRVMVPKAKVNQLMDDLYEVGARGIIVTALQASRM</sequence>
<protein>
    <recommendedName>
        <fullName evidence="1">ATP phosphoribosyltransferase</fullName>
        <shortName evidence="1">ATP-PRT</shortName>
        <shortName evidence="1">ATP-PRTase</shortName>
        <ecNumber evidence="1">2.4.2.17</ecNumber>
    </recommendedName>
</protein>